<keyword id="KW-0002">3D-structure</keyword>
<keyword id="KW-0963">Cytoplasm</keyword>
<keyword id="KW-1185">Reference proteome</keyword>
<keyword id="KW-0687">Ribonucleoprotein</keyword>
<keyword id="KW-0689">Ribosomal protein</keyword>
<proteinExistence type="evidence at protein level"/>
<reference key="1">
    <citation type="journal article" date="1990" name="Biochem. Biophys. Res. Commun.">
        <title>Nucleotide sequence determination of mouse, chicken and Xenopus laevis rig cDNAs: the rig-encoded protein is extremely conserved during vertebrate evolution.</title>
        <authorList>
            <person name="Sugawara A."/>
            <person name="Nata K."/>
            <person name="Inoue C."/>
            <person name="Takasawa S."/>
            <person name="Yamamoto H."/>
            <person name="Okamoto H."/>
        </authorList>
    </citation>
    <scope>NUCLEOTIDE SEQUENCE [MRNA]</scope>
</reference>
<reference key="2">
    <citation type="submission" date="2004-08" db="EMBL/GenBank/DDBJ databases">
        <authorList>
            <consortium name="NIH - Xenopus Gene Collection (XGC) project"/>
        </authorList>
    </citation>
    <scope>NUCLEOTIDE SEQUENCE [LARGE SCALE MRNA]</scope>
    <source>
        <tissue>Kidney</tissue>
    </source>
</reference>
<name>RS15_XENLA</name>
<gene>
    <name type="primary">rps15</name>
    <name type="synonym">rig</name>
</gene>
<evidence type="ECO:0000250" key="1"/>
<evidence type="ECO:0000250" key="2">
    <source>
        <dbReference type="UniProtKB" id="P62841"/>
    </source>
</evidence>
<evidence type="ECO:0000305" key="3"/>
<organism>
    <name type="scientific">Xenopus laevis</name>
    <name type="common">African clawed frog</name>
    <dbReference type="NCBI Taxonomy" id="8355"/>
    <lineage>
        <taxon>Eukaryota</taxon>
        <taxon>Metazoa</taxon>
        <taxon>Chordata</taxon>
        <taxon>Craniata</taxon>
        <taxon>Vertebrata</taxon>
        <taxon>Euteleostomi</taxon>
        <taxon>Amphibia</taxon>
        <taxon>Batrachia</taxon>
        <taxon>Anura</taxon>
        <taxon>Pipoidea</taxon>
        <taxon>Pipidae</taxon>
        <taxon>Xenopodinae</taxon>
        <taxon>Xenopus</taxon>
        <taxon>Xenopus</taxon>
    </lineage>
</organism>
<dbReference type="EMBL" id="M33332">
    <property type="protein sequence ID" value="AAA49946.1"/>
    <property type="molecule type" value="mRNA"/>
</dbReference>
<dbReference type="EMBL" id="BC053812">
    <property type="protein sequence ID" value="AAH53812.1"/>
    <property type="molecule type" value="mRNA"/>
</dbReference>
<dbReference type="EMBL" id="BC081261">
    <property type="protein sequence ID" value="AAH81261.1"/>
    <property type="molecule type" value="mRNA"/>
</dbReference>
<dbReference type="PIR" id="C34823">
    <property type="entry name" value="C34823"/>
</dbReference>
<dbReference type="RefSeq" id="NP_001080833.1">
    <property type="nucleotide sequence ID" value="NM_001087364.2"/>
</dbReference>
<dbReference type="RefSeq" id="NP_001089043.1">
    <property type="nucleotide sequence ID" value="NM_001095574.1"/>
</dbReference>
<dbReference type="PDB" id="7OYC">
    <property type="method" value="EM"/>
    <property type="resolution" value="2.40 A"/>
    <property type="chains" value="P2=1-145"/>
</dbReference>
<dbReference type="PDBsum" id="7OYC"/>
<dbReference type="EMDB" id="EMD-13113"/>
<dbReference type="SMR" id="P20342"/>
<dbReference type="BioGRID" id="106509">
    <property type="interactions" value="3"/>
</dbReference>
<dbReference type="BioGRID" id="98769">
    <property type="interactions" value="1"/>
</dbReference>
<dbReference type="IntAct" id="P20342">
    <property type="interactions" value="1"/>
</dbReference>
<dbReference type="DNASU" id="380527"/>
<dbReference type="GeneID" id="380527"/>
<dbReference type="GeneID" id="548611"/>
<dbReference type="KEGG" id="xla:380527"/>
<dbReference type="KEGG" id="xla:548611"/>
<dbReference type="AGR" id="Xenbase:XB-GENE-17335694"/>
<dbReference type="CTD" id="380527"/>
<dbReference type="CTD" id="548611"/>
<dbReference type="Xenbase" id="XB-GENE-17335694">
    <property type="gene designation" value="rps15.L"/>
</dbReference>
<dbReference type="OMA" id="PMENDMI"/>
<dbReference type="OrthoDB" id="10258210at2759"/>
<dbReference type="CD-CODE" id="78E86D56">
    <property type="entry name" value="Mitochondrial cloud"/>
</dbReference>
<dbReference type="Proteomes" id="UP000186698">
    <property type="component" value="Chromosome 1L"/>
</dbReference>
<dbReference type="Proteomes" id="UP000186698">
    <property type="component" value="Chromosome 1S"/>
</dbReference>
<dbReference type="Bgee" id="380527">
    <property type="expression patterns" value="Expressed in internal ear and 19 other cell types or tissues"/>
</dbReference>
<dbReference type="GO" id="GO:0022627">
    <property type="term" value="C:cytosolic small ribosomal subunit"/>
    <property type="evidence" value="ECO:0000318"/>
    <property type="project" value="GO_Central"/>
</dbReference>
<dbReference type="GO" id="GO:0003723">
    <property type="term" value="F:RNA binding"/>
    <property type="evidence" value="ECO:0007669"/>
    <property type="project" value="InterPro"/>
</dbReference>
<dbReference type="GO" id="GO:0003735">
    <property type="term" value="F:structural constituent of ribosome"/>
    <property type="evidence" value="ECO:0000318"/>
    <property type="project" value="GO_Central"/>
</dbReference>
<dbReference type="GO" id="GO:0000028">
    <property type="term" value="P:ribosomal small subunit assembly"/>
    <property type="evidence" value="ECO:0000318"/>
    <property type="project" value="GO_Central"/>
</dbReference>
<dbReference type="GO" id="GO:0006412">
    <property type="term" value="P:translation"/>
    <property type="evidence" value="ECO:0007669"/>
    <property type="project" value="InterPro"/>
</dbReference>
<dbReference type="FunFam" id="3.30.860.10:FF:000002">
    <property type="entry name" value="40S ribosomal protein S15"/>
    <property type="match status" value="1"/>
</dbReference>
<dbReference type="Gene3D" id="3.30.860.10">
    <property type="entry name" value="30s Ribosomal Protein S19, Chain A"/>
    <property type="match status" value="1"/>
</dbReference>
<dbReference type="HAMAP" id="MF_00531">
    <property type="entry name" value="Ribosomal_uS19"/>
    <property type="match status" value="1"/>
</dbReference>
<dbReference type="InterPro" id="IPR002222">
    <property type="entry name" value="Ribosomal_uS19"/>
</dbReference>
<dbReference type="InterPro" id="IPR020934">
    <property type="entry name" value="Ribosomal_uS19_CS"/>
</dbReference>
<dbReference type="InterPro" id="IPR005713">
    <property type="entry name" value="Ribosomal_uS19_euk/arc"/>
</dbReference>
<dbReference type="InterPro" id="IPR023575">
    <property type="entry name" value="Ribosomal_uS19_SF"/>
</dbReference>
<dbReference type="NCBIfam" id="NF003121">
    <property type="entry name" value="PRK04038.1"/>
    <property type="match status" value="1"/>
</dbReference>
<dbReference type="NCBIfam" id="TIGR01025">
    <property type="entry name" value="uS19_arch"/>
    <property type="match status" value="1"/>
</dbReference>
<dbReference type="PANTHER" id="PTHR11880">
    <property type="entry name" value="RIBOSOMAL PROTEIN S19P FAMILY MEMBER"/>
    <property type="match status" value="1"/>
</dbReference>
<dbReference type="PANTHER" id="PTHR11880:SF2">
    <property type="entry name" value="SMALL RIBOSOMAL SUBUNIT PROTEIN US19"/>
    <property type="match status" value="1"/>
</dbReference>
<dbReference type="Pfam" id="PF00203">
    <property type="entry name" value="Ribosomal_S19"/>
    <property type="match status" value="1"/>
</dbReference>
<dbReference type="PIRSF" id="PIRSF002144">
    <property type="entry name" value="Ribosomal_S19"/>
    <property type="match status" value="1"/>
</dbReference>
<dbReference type="PRINTS" id="PR00975">
    <property type="entry name" value="RIBOSOMALS19"/>
</dbReference>
<dbReference type="SUPFAM" id="SSF54570">
    <property type="entry name" value="Ribosomal protein S19"/>
    <property type="match status" value="1"/>
</dbReference>
<dbReference type="PROSITE" id="PS00323">
    <property type="entry name" value="RIBOSOMAL_S19"/>
    <property type="match status" value="1"/>
</dbReference>
<protein>
    <recommendedName>
        <fullName evidence="3">Small ribosomal subunit protein uS19</fullName>
    </recommendedName>
    <alternativeName>
        <fullName>40S ribosomal protein S15</fullName>
    </alternativeName>
    <alternativeName>
        <fullName>RIG protein</fullName>
    </alternativeName>
</protein>
<accession>P20342</accession>
<accession>Q642P0</accession>
<sequence>MAEVEQKKKRTFKKFTYRGVDLDQLLDMSYEQVMQLYCARQRRRLNRGLRRKQNSLLKRLRKAKKEAPPMEKPEVIKTHLRDMIILPEMVGSMVGVYNGKAFNQVEIKPEMIGHYLGEFSITYKPVKHGRPGIGATHSSRFIPLK</sequence>
<feature type="initiator methionine" description="Removed" evidence="1">
    <location>
        <position position="1"/>
    </location>
</feature>
<feature type="chain" id="PRO_0000130034" description="Small ribosomal subunit protein uS19">
    <location>
        <begin position="2"/>
        <end position="145"/>
    </location>
</feature>
<comment type="function">
    <text evidence="2">Component of the small ribosomal subunit. The ribosome is a large ribonucleoprotein complex responsible for the synthesis of proteins in the cell.</text>
</comment>
<comment type="subunit">
    <text evidence="2">Component of the small ribosomal subunit.</text>
</comment>
<comment type="subcellular location">
    <subcellularLocation>
        <location evidence="2">Cytoplasm</location>
    </subcellularLocation>
</comment>
<comment type="similarity">
    <text evidence="3">Belongs to the universal ribosomal protein uS19 family.</text>
</comment>